<name>IMM7_ECOLX</name>
<reference key="1">
    <citation type="journal article" date="1991" name="J. Gen. Microbiol.">
        <title>Cloning and characterization of the ColE7 plasmid.</title>
        <authorList>
            <person name="Chak K.-F."/>
            <person name="Kuo W.S."/>
            <person name="Lu F.M."/>
            <person name="James R."/>
        </authorList>
    </citation>
    <scope>NUCLEOTIDE SEQUENCE [GENOMIC DNA]</scope>
</reference>
<reference key="2">
    <citation type="submission" date="1994-07" db="EMBL/GenBank/DDBJ databases">
        <title>Nucleotide sequence encoding the immunity and lysis proteins and the carboxyl-terminal peptides of colicins E4 and E7.</title>
        <authorList>
            <person name="Lau P.C.K."/>
            <person name="Parsons M."/>
        </authorList>
    </citation>
    <scope>NUCLEOTIDE SEQUENCE [GENOMIC DNA]</scope>
    <source>
        <strain>K317</strain>
    </source>
</reference>
<reference key="3">
    <citation type="journal article" date="1996" name="Proc. Natl. Acad. Sci. U.S.A.">
        <title>The crystal structure of the immunity protein of colicin E7 suggests a possible colicin-interacting surface.</title>
        <authorList>
            <person name="Chak K.-F."/>
            <person name="Safo M.K."/>
            <person name="Ku W.-Y."/>
            <person name="Hsieh S.-Y."/>
            <person name="Yuan H.S."/>
        </authorList>
    </citation>
    <scope>X-RAY CRYSTALLOGRAPHY (1.8 ANGSTROMS)</scope>
</reference>
<reference key="4">
    <citation type="journal article" date="1997" name="EMBO J.">
        <title>A novel role of ImmE7 in the autoregulatory expression of the ColE7 operon and identification of possible RNase active sites in the crystal structure of dimeric ImmE7.</title>
        <authorList>
            <person name="Hsieh S.-Y."/>
            <person name="Ko T.P."/>
            <person name="Tseng M.Y."/>
            <person name="Ku W.-Y."/>
            <person name="Chak K.-F."/>
            <person name="Yuan H.S."/>
        </authorList>
    </citation>
    <scope>X-RAY CRYSTALLOGRAPHY (1.8 ANGSTROMS)</scope>
</reference>
<reference key="5">
    <citation type="journal article" date="1999" name="Structure">
        <title>The crystal structure of the DNase domain of colicin E7 in complex with its inhibitor Im7 protein.</title>
        <authorList>
            <person name="Ko T.P."/>
            <person name="Liao C.C."/>
            <person name="Ku W.-Y."/>
            <person name="Chak K.-F."/>
            <person name="Yuan H.S."/>
        </authorList>
    </citation>
    <scope>X-RAY CRYSTALLOGRAPHY (2.3 ANGSTROMS)</scope>
</reference>
<sequence>MELKNSISDYTEAEFVQLLKEIEKENVAATDDVLDVLLEHFVKITEHPDGTDLIYYPSDNRDDSPEGIVKEIKEWRAANGKPGFKQG</sequence>
<evidence type="ECO:0000305" key="1"/>
<evidence type="ECO:0007829" key="2">
    <source>
        <dbReference type="PDB" id="1CEI"/>
    </source>
</evidence>
<evidence type="ECO:0007829" key="3">
    <source>
        <dbReference type="PDB" id="4F37"/>
    </source>
</evidence>
<geneLocation type="plasmid">
    <name>ColE7</name>
</geneLocation>
<dbReference type="EMBL" id="M57540">
    <property type="protein sequence ID" value="AAA23071.1"/>
    <property type="molecule type" value="Genomic_DNA"/>
</dbReference>
<dbReference type="EMBL" id="X63620">
    <property type="protein sequence ID" value="CAA45165.1"/>
    <property type="molecule type" value="Genomic_DNA"/>
</dbReference>
<dbReference type="PIR" id="S27394">
    <property type="entry name" value="S27394"/>
</dbReference>
<dbReference type="RefSeq" id="WP_001560791.1">
    <property type="nucleotide sequence ID" value="NZ_WSXM01000092.1"/>
</dbReference>
<dbReference type="RefSeq" id="YP_009060494.1">
    <property type="nucleotide sequence ID" value="NC_024962.1"/>
</dbReference>
<dbReference type="PDB" id="1AYI">
    <property type="method" value="X-ray"/>
    <property type="resolution" value="2.00 A"/>
    <property type="chains" value="A=1-87"/>
</dbReference>
<dbReference type="PDB" id="1CEI">
    <property type="method" value="X-ray"/>
    <property type="resolution" value="1.80 A"/>
    <property type="chains" value="A=1-87"/>
</dbReference>
<dbReference type="PDB" id="1MZ8">
    <property type="method" value="X-ray"/>
    <property type="resolution" value="2.00 A"/>
    <property type="chains" value="A/C=1-87"/>
</dbReference>
<dbReference type="PDB" id="1UJZ">
    <property type="method" value="X-ray"/>
    <property type="resolution" value="2.10 A"/>
    <property type="chains" value="A=1-87"/>
</dbReference>
<dbReference type="PDB" id="1UNK">
    <property type="method" value="X-ray"/>
    <property type="resolution" value="1.80 A"/>
    <property type="chains" value="A/B/C/D=1-87"/>
</dbReference>
<dbReference type="PDB" id="1ZNV">
    <property type="method" value="X-ray"/>
    <property type="resolution" value="2.00 A"/>
    <property type="chains" value="A/C=1-87"/>
</dbReference>
<dbReference type="PDB" id="2ERH">
    <property type="method" value="X-ray"/>
    <property type="resolution" value="2.00 A"/>
    <property type="chains" value="A=1-87"/>
</dbReference>
<dbReference type="PDB" id="2JAZ">
    <property type="method" value="X-ray"/>
    <property type="resolution" value="2.03 A"/>
    <property type="chains" value="A/C=1-87"/>
</dbReference>
<dbReference type="PDB" id="2JB0">
    <property type="method" value="X-ray"/>
    <property type="resolution" value="1.91 A"/>
    <property type="chains" value="A=1-87"/>
</dbReference>
<dbReference type="PDB" id="2JBG">
    <property type="method" value="X-ray"/>
    <property type="resolution" value="2.20 A"/>
    <property type="chains" value="A/C=1-87"/>
</dbReference>
<dbReference type="PDB" id="2K0D">
    <property type="method" value="NMR"/>
    <property type="chains" value="X=2-87"/>
</dbReference>
<dbReference type="PDB" id="4F37">
    <property type="method" value="X-ray"/>
    <property type="resolution" value="2.57 A"/>
    <property type="chains" value="A/B=2-87"/>
</dbReference>
<dbReference type="PDB" id="5WNW">
    <property type="method" value="X-ray"/>
    <property type="resolution" value="1.79 A"/>
    <property type="chains" value="C=6-45"/>
</dbReference>
<dbReference type="PDB" id="7CEI">
    <property type="method" value="X-ray"/>
    <property type="resolution" value="2.30 A"/>
    <property type="chains" value="A=1-87"/>
</dbReference>
<dbReference type="PDBsum" id="1AYI"/>
<dbReference type="PDBsum" id="1CEI"/>
<dbReference type="PDBsum" id="1MZ8"/>
<dbReference type="PDBsum" id="1UJZ"/>
<dbReference type="PDBsum" id="1UNK"/>
<dbReference type="PDBsum" id="1ZNV"/>
<dbReference type="PDBsum" id="2ERH"/>
<dbReference type="PDBsum" id="2JAZ"/>
<dbReference type="PDBsum" id="2JB0"/>
<dbReference type="PDBsum" id="2JBG"/>
<dbReference type="PDBsum" id="2K0D"/>
<dbReference type="PDBsum" id="4F37"/>
<dbReference type="PDBsum" id="5WNW"/>
<dbReference type="PDBsum" id="7CEI"/>
<dbReference type="BMRB" id="Q03708"/>
<dbReference type="SMR" id="Q03708"/>
<dbReference type="DIP" id="DIP-16989N"/>
<dbReference type="IntAct" id="Q03708">
    <property type="interactions" value="3"/>
</dbReference>
<dbReference type="TCDB" id="8.B.24.5.5">
    <property type="family name" value="the colicin immunity protein (colip) functional family"/>
</dbReference>
<dbReference type="EvolutionaryTrace" id="Q03708"/>
<dbReference type="GO" id="GO:0015643">
    <property type="term" value="F:toxic substance binding"/>
    <property type="evidence" value="ECO:0007669"/>
    <property type="project" value="InterPro"/>
</dbReference>
<dbReference type="GO" id="GO:0030153">
    <property type="term" value="P:bacteriocin immunity"/>
    <property type="evidence" value="ECO:0007669"/>
    <property type="project" value="UniProtKB-KW"/>
</dbReference>
<dbReference type="CDD" id="cd16363">
    <property type="entry name" value="Col_Im_like"/>
    <property type="match status" value="1"/>
</dbReference>
<dbReference type="Gene3D" id="1.10.1200.20">
    <property type="entry name" value="Colicin E immunity protein"/>
    <property type="match status" value="1"/>
</dbReference>
<dbReference type="InterPro" id="IPR035900">
    <property type="entry name" value="Colicin_E_sf"/>
</dbReference>
<dbReference type="InterPro" id="IPR000290">
    <property type="entry name" value="Colicin_pyocin"/>
</dbReference>
<dbReference type="Pfam" id="PF01320">
    <property type="entry name" value="Colicin_Pyocin"/>
    <property type="match status" value="1"/>
</dbReference>
<dbReference type="PRINTS" id="PR01299">
    <property type="entry name" value="PYOCIN"/>
</dbReference>
<dbReference type="SUPFAM" id="SSF47345">
    <property type="entry name" value="Colicin E immunity proteins"/>
    <property type="match status" value="1"/>
</dbReference>
<proteinExistence type="evidence at protein level"/>
<organism>
    <name type="scientific">Escherichia coli</name>
    <dbReference type="NCBI Taxonomy" id="562"/>
    <lineage>
        <taxon>Bacteria</taxon>
        <taxon>Pseudomonadati</taxon>
        <taxon>Pseudomonadota</taxon>
        <taxon>Gammaproteobacteria</taxon>
        <taxon>Enterobacterales</taxon>
        <taxon>Enterobacteriaceae</taxon>
        <taxon>Escherichia</taxon>
    </lineage>
</organism>
<protein>
    <recommendedName>
        <fullName>Colicin-E7 immunity protein</fullName>
    </recommendedName>
    <alternativeName>
        <fullName>ImmE7</fullName>
    </alternativeName>
    <alternativeName>
        <fullName>Microcin-E7 immunity protein</fullName>
    </alternativeName>
</protein>
<accession>Q03708</accession>
<accession>Q47113</accession>
<comment type="function">
    <text>This protein is able to protect a cell, which harbors the plasmid ColE7 encoding colicin E7, against colicin E7, it binds specifically to the DNase-type colicin and inhibits its bactericidal activity. Dimeric ImmE7 may possess a RNase activity that cleaves its own mRNA at a specific site and thus autoregulates translational expression of the downstream ceiE7 gene as well as degradation of the upstream ceaE7 mRNA.</text>
</comment>
<comment type="interaction">
    <interactant intactId="EBI-1035025">
        <id>Q03708</id>
    </interactant>
    <interactant intactId="EBI-1035016">
        <id>Q47112</id>
        <label>colE7</label>
    </interactant>
    <organismsDiffer>false</organismsDiffer>
    <experiments>7</experiments>
</comment>
<comment type="interaction">
    <interactant intactId="EBI-1035025">
        <id>Q03708</id>
    </interactant>
    <interactant intactId="EBI-1121716">
        <id>P77754</id>
        <label>spy</label>
    </interactant>
    <organismsDiffer>true</organismsDiffer>
    <experiments>2</experiments>
</comment>
<comment type="similarity">
    <text evidence="1">Belongs to the colicins ColE2/ColE8/ColE9 and pyocins S1/S2 family.</text>
</comment>
<keyword id="KW-0002">3D-structure</keyword>
<keyword id="KW-0079">Bacteriocin immunity</keyword>
<keyword id="KW-0614">Plasmid</keyword>
<gene>
    <name type="primary">imm</name>
    <name type="synonym">ceiE7</name>
</gene>
<feature type="chain" id="PRO_0000218708" description="Colicin-E7 immunity protein">
    <location>
        <begin position="1"/>
        <end position="87"/>
    </location>
</feature>
<feature type="sequence conflict" description="In Ref. 1; AAA23071." evidence="1" ref="1">
    <original>K</original>
    <variation>E</variation>
    <location>
        <position position="4"/>
    </location>
</feature>
<feature type="sequence conflict" description="In Ref. 1; AAA23071." evidence="1" ref="1">
    <original>V</original>
    <variation>E</variation>
    <location>
        <position position="27"/>
    </location>
</feature>
<feature type="helix" evidence="2">
    <location>
        <begin position="7"/>
        <end position="9"/>
    </location>
</feature>
<feature type="helix" evidence="2">
    <location>
        <begin position="12"/>
        <end position="25"/>
    </location>
</feature>
<feature type="strand" evidence="2">
    <location>
        <begin position="28"/>
        <end position="31"/>
    </location>
</feature>
<feature type="helix" evidence="2">
    <location>
        <begin position="32"/>
        <end position="45"/>
    </location>
</feature>
<feature type="turn" evidence="2">
    <location>
        <begin position="48"/>
        <end position="51"/>
    </location>
</feature>
<feature type="helix" evidence="2">
    <location>
        <begin position="52"/>
        <end position="55"/>
    </location>
</feature>
<feature type="strand" evidence="3">
    <location>
        <begin position="59"/>
        <end position="61"/>
    </location>
</feature>
<feature type="helix" evidence="2">
    <location>
        <begin position="65"/>
        <end position="78"/>
    </location>
</feature>